<gene>
    <name type="ORF">ORF105</name>
</gene>
<sequence>MICKDGFLINEENGEVIDYCYENNEMVQDKELEHYSVTPPVPYVPEKYKEKMKEYNKWLKGKEAFIQLKMKAVKKIEYLKNLCANEETQINKRTRKSRRLLTPKT</sequence>
<reference key="1">
    <citation type="journal article" date="2007" name="Virology">
        <title>Genome of the Acidianus bottle-shaped virus and insights into the replication and packaging mechanisms.</title>
        <authorList>
            <person name="Peng X."/>
            <person name="Basta T."/>
            <person name="Haring M."/>
            <person name="Garrett R.A."/>
            <person name="Prangishvili D."/>
        </authorList>
    </citation>
    <scope>NUCLEOTIDE SEQUENCE [GENOMIC DNA]</scope>
</reference>
<protein>
    <recommendedName>
        <fullName>Uncharacterized protein ORF105</fullName>
    </recommendedName>
</protein>
<organism>
    <name type="scientific">Acidianus bottle-shaped virus (isolate Italy/Pozzuoli)</name>
    <name type="common">ABV</name>
    <dbReference type="NCBI Taxonomy" id="654911"/>
    <lineage>
        <taxon>Viruses</taxon>
        <taxon>Viruses incertae sedis</taxon>
        <taxon>Ampullaviridae</taxon>
        <taxon>Bottigliavirus</taxon>
        <taxon>Bottigliavirus ABV</taxon>
    </lineage>
</organism>
<proteinExistence type="predicted"/>
<dbReference type="EMBL" id="EF432053">
    <property type="protein sequence ID" value="ABP73402.1"/>
    <property type="molecule type" value="Genomic_DNA"/>
</dbReference>
<dbReference type="RefSeq" id="YP_001210316.1">
    <property type="nucleotide sequence ID" value="NC_009452.1"/>
</dbReference>
<dbReference type="GeneID" id="5129838"/>
<dbReference type="KEGG" id="vg:5129838"/>
<dbReference type="Proteomes" id="UP000000513">
    <property type="component" value="Segment"/>
</dbReference>
<organismHost>
    <name type="scientific">Acidianus convivator</name>
    <dbReference type="NCBI Taxonomy" id="269667"/>
</organismHost>
<feature type="chain" id="PRO_0000384848" description="Uncharacterized protein ORF105">
    <location>
        <begin position="1"/>
        <end position="105"/>
    </location>
</feature>
<name>Y105_ABVP</name>
<accession>A4ZU98</accession>
<keyword id="KW-1185">Reference proteome</keyword>